<proteinExistence type="predicted"/>
<dbReference type="EMBL" id="AY653733">
    <property type="protein sequence ID" value="AAV50463.1"/>
    <property type="molecule type" value="Genomic_DNA"/>
</dbReference>
<dbReference type="SMR" id="Q5URB1"/>
<dbReference type="KEGG" id="vg:9924794"/>
<dbReference type="Proteomes" id="UP000001134">
    <property type="component" value="Genome"/>
</dbReference>
<keyword id="KW-1185">Reference proteome</keyword>
<accession>Q5URB1</accession>
<organism>
    <name type="scientific">Acanthamoeba polyphaga mimivirus</name>
    <name type="common">APMV</name>
    <dbReference type="NCBI Taxonomy" id="212035"/>
    <lineage>
        <taxon>Viruses</taxon>
        <taxon>Varidnaviria</taxon>
        <taxon>Bamfordvirae</taxon>
        <taxon>Nucleocytoviricota</taxon>
        <taxon>Megaviricetes</taxon>
        <taxon>Imitervirales</taxon>
        <taxon>Mimiviridae</taxon>
        <taxon>Megamimivirinae</taxon>
        <taxon>Mimivirus</taxon>
        <taxon>Mimivirus bradfordmassiliense</taxon>
    </lineage>
</organism>
<name>YL189_MIMIV</name>
<organismHost>
    <name type="scientific">Acanthamoeba polyphaga</name>
    <name type="common">Amoeba</name>
    <dbReference type="NCBI Taxonomy" id="5757"/>
</organismHost>
<feature type="chain" id="PRO_0000071243" description="Uncharacterized protein L189">
    <location>
        <begin position="1"/>
        <end position="120"/>
    </location>
</feature>
<protein>
    <recommendedName>
        <fullName>Uncharacterized protein L189</fullName>
    </recommendedName>
</protein>
<gene>
    <name type="ordered locus">MIMI_L189</name>
</gene>
<reference key="1">
    <citation type="journal article" date="2004" name="Science">
        <title>The 1.2-megabase genome sequence of Mimivirus.</title>
        <authorList>
            <person name="Raoult D."/>
            <person name="Audic S."/>
            <person name="Robert C."/>
            <person name="Abergel C."/>
            <person name="Renesto P."/>
            <person name="Ogata H."/>
            <person name="La Scola B."/>
            <person name="Susan M."/>
            <person name="Claverie J.-M."/>
        </authorList>
    </citation>
    <scope>NUCLEOTIDE SEQUENCE [LARGE SCALE GENOMIC DNA]</scope>
    <source>
        <strain>Rowbotham-Bradford</strain>
    </source>
</reference>
<sequence length="120" mass="14113">MNPKNNIFKSTQVDKSQYENIFKQINDGLDEKPSDDLSKSTKTDEKKFSEEELVVVEQLCRLKKIPKKNNEKNKKIIFPIKNIQKIESSCRINDRSIKRLKKPIYIGDKKINKLSIVLYK</sequence>